<keyword id="KW-0539">Nucleus</keyword>
<keyword id="KW-1185">Reference proteome</keyword>
<gene>
    <name evidence="7" type="primary">adbp-1</name>
    <name evidence="5" type="synonym">2L737</name>
    <name evidence="7" type="ORF">VW02B12L.4</name>
</gene>
<protein>
    <recommendedName>
        <fullName evidence="3">Adr-2-binding protein 1</fullName>
    </recommendedName>
</protein>
<proteinExistence type="evidence at protein level"/>
<dbReference type="EMBL" id="AF303256">
    <property type="protein sequence ID" value="AAG50214.1"/>
    <property type="molecule type" value="mRNA"/>
</dbReference>
<dbReference type="EMBL" id="BX284602">
    <property type="protein sequence ID" value="CAA20335.2"/>
    <property type="molecule type" value="Genomic_DNA"/>
</dbReference>
<dbReference type="PIR" id="T18566">
    <property type="entry name" value="T18566"/>
</dbReference>
<dbReference type="RefSeq" id="NP_496439.1">
    <property type="nucleotide sequence ID" value="NM_064038.9"/>
</dbReference>
<dbReference type="SMR" id="G5EDW1"/>
<dbReference type="FunCoup" id="G5EDW1">
    <property type="interactions" value="1696"/>
</dbReference>
<dbReference type="IntAct" id="G5EDW1">
    <property type="interactions" value="1"/>
</dbReference>
<dbReference type="STRING" id="6239.VW02B12L.4.1"/>
<dbReference type="PaxDb" id="6239-VW02B12L.4"/>
<dbReference type="PeptideAtlas" id="G5EDW1"/>
<dbReference type="EnsemblMetazoa" id="VW02B12L.4.1">
    <property type="protein sequence ID" value="VW02B12L.4.1"/>
    <property type="gene ID" value="WBGene00012157"/>
</dbReference>
<dbReference type="GeneID" id="174745"/>
<dbReference type="KEGG" id="cel:CELE_VW02B12L.4"/>
<dbReference type="AGR" id="WB:WBGene00012157"/>
<dbReference type="CTD" id="174745"/>
<dbReference type="WormBase" id="VW02B12L.4">
    <property type="protein sequence ID" value="CE26728"/>
    <property type="gene ID" value="WBGene00012157"/>
    <property type="gene designation" value="adbp-1"/>
</dbReference>
<dbReference type="eggNOG" id="ENOG502THRE">
    <property type="taxonomic scope" value="Eukaryota"/>
</dbReference>
<dbReference type="HOGENOM" id="CLU_1273281_0_0_1"/>
<dbReference type="InParanoid" id="G5EDW1"/>
<dbReference type="OMA" id="SRENWGM"/>
<dbReference type="OrthoDB" id="5826039at2759"/>
<dbReference type="PRO" id="PR:G5EDW1"/>
<dbReference type="Proteomes" id="UP000001940">
    <property type="component" value="Chromosome II"/>
</dbReference>
<dbReference type="Bgee" id="WBGene00012157">
    <property type="expression patterns" value="Expressed in embryo and 3 other cell types or tissues"/>
</dbReference>
<dbReference type="GO" id="GO:0005634">
    <property type="term" value="C:nucleus"/>
    <property type="evidence" value="ECO:0000314"/>
    <property type="project" value="WormBase"/>
</dbReference>
<dbReference type="GO" id="GO:1900182">
    <property type="term" value="P:positive regulation of protein localization to nucleus"/>
    <property type="evidence" value="ECO:0000315"/>
    <property type="project" value="UniProtKB"/>
</dbReference>
<name>ADBP1_CAEEL</name>
<reference evidence="6" key="1">
    <citation type="journal article" date="1998" name="Science">
        <title>Genome sequence of the nematode C. elegans: a platform for investigating biology.</title>
        <authorList>
            <consortium name="The C. elegans sequencing consortium"/>
        </authorList>
    </citation>
    <scope>NUCLEOTIDE SEQUENCE [LARGE SCALE GENOMIC DNA]</scope>
    <source>
        <strain evidence="6">Bristol N2</strain>
    </source>
</reference>
<reference evidence="5" key="2">
    <citation type="submission" date="2000-08" db="EMBL/GenBank/DDBJ databases">
        <title>The Caenorhabditis elegans transcriptome project, a complementary view of the genome.</title>
        <authorList>
            <person name="Kohara Y."/>
            <person name="Shin'i T."/>
            <person name="Suzuki Y."/>
            <person name="Sugano S."/>
            <person name="Potdevin M."/>
            <person name="Thierry-Mieg Y."/>
            <person name="Thierry-Mieg D."/>
            <person name="Thierry-Mieg J."/>
        </authorList>
    </citation>
    <scope>NUCLEOTIDE SEQUENCE [LARGE SCALE MRNA]</scope>
    <source>
        <strain evidence="5">Bristol N2</strain>
    </source>
</reference>
<reference evidence="4" key="3">
    <citation type="journal article" date="2008" name="Genetics">
        <title>ADBP-1 regulates an ADAR RNA-editing enzyme to antagonize RNA-interference-mediated gene silencing in Caenorhabditis elegans.</title>
        <authorList>
            <person name="Ohta H."/>
            <person name="Fujiwara M."/>
            <person name="Ohshima Y."/>
            <person name="Ishihara T."/>
        </authorList>
    </citation>
    <scope>FUNCTION</scope>
    <scope>INTERACTION WITH ADR-2</scope>
    <scope>SUBCELLULAR LOCATION</scope>
    <scope>TISSUE SPECIFICITY</scope>
    <scope>DEVELOPMENTAL STAGE</scope>
    <scope>MUTAGENESIS OF 119-GLN--CYS-217</scope>
</reference>
<evidence type="ECO:0000256" key="1">
    <source>
        <dbReference type="SAM" id="MobiDB-lite"/>
    </source>
</evidence>
<evidence type="ECO:0000269" key="2">
    <source>
    </source>
</evidence>
<evidence type="ECO:0000303" key="3">
    <source>
    </source>
</evidence>
<evidence type="ECO:0000305" key="4"/>
<evidence type="ECO:0000312" key="5">
    <source>
        <dbReference type="EMBL" id="AAG50214.1"/>
    </source>
</evidence>
<evidence type="ECO:0000312" key="6">
    <source>
        <dbReference type="Proteomes" id="UP000001940"/>
    </source>
</evidence>
<evidence type="ECO:0000312" key="7">
    <source>
        <dbReference type="WormBase" id="VW02B12L.4"/>
    </source>
</evidence>
<sequence>MSFASGCTPVSFDKLFEVSSGDKVSRENWGMIARPEPQHDSLKRRNTTSSIAKKKAKMTRGDEQITDETARKAATQLLDQIQDTPGRISLNFETPEAASVCPIPTSLNQIVNTKWTVNQLQEGQLTMLLAQDANKFKSLGVKNIKKGSVETQILPRQMDVKEIVEKLKKQDNDSDQFVGYAAAVANVLRRCDAETAQKITQAITATIEKEAPSIVNC</sequence>
<organism evidence="6">
    <name type="scientific">Caenorhabditis elegans</name>
    <dbReference type="NCBI Taxonomy" id="6239"/>
    <lineage>
        <taxon>Eukaryota</taxon>
        <taxon>Metazoa</taxon>
        <taxon>Ecdysozoa</taxon>
        <taxon>Nematoda</taxon>
        <taxon>Chromadorea</taxon>
        <taxon>Rhabditida</taxon>
        <taxon>Rhabditina</taxon>
        <taxon>Rhabditomorpha</taxon>
        <taxon>Rhabditoidea</taxon>
        <taxon>Rhabditidae</taxon>
        <taxon>Peloderinae</taxon>
        <taxon>Caenorhabditis</taxon>
    </lineage>
</organism>
<comment type="function">
    <text evidence="2">Required for the A-I editing activity of the double-stranded RNA-specific adenosine deaminase adr-2 by facilitating adr-2 nuclear localization.</text>
</comment>
<comment type="subunit">
    <text evidence="2">Interacts with double-stranded RNA-specific adenosine deaminase adr-2.</text>
</comment>
<comment type="subcellular location">
    <subcellularLocation>
        <location evidence="2">Nucleus</location>
    </subcellularLocation>
</comment>
<comment type="tissue specificity">
    <text evidence="2">Expressed in main body hypodermal cells, the hypodermal seam cells, pharynx, intestine and some neurons.</text>
</comment>
<comment type="developmental stage">
    <text evidence="2">Expression starts in the embryo and continues through young adulthood with lower levels in older adults.</text>
</comment>
<accession>G5EDW1</accession>
<feature type="chain" id="PRO_0000442983" description="Adr-2-binding protein 1">
    <location>
        <begin position="1"/>
        <end position="217"/>
    </location>
</feature>
<feature type="region of interest" description="Disordered" evidence="1">
    <location>
        <begin position="33"/>
        <end position="65"/>
    </location>
</feature>
<feature type="compositionally biased region" description="Basic residues" evidence="1">
    <location>
        <begin position="44"/>
        <end position="58"/>
    </location>
</feature>
<feature type="mutagenesis site" description="In qj1: Causes transgene silencing in hypodermal and intestinal cells but does not appear to markedly affect transgenes expressed in muscles or neurons. Abolishes A-to-I RNA editing of known substrates. Reduced nuclear localization of adr-2. Does not affect fertility." evidence="2">
    <location>
        <begin position="119"/>
        <end position="217"/>
    </location>
</feature>